<dbReference type="EC" id="2.4.1.-" evidence="4"/>
<dbReference type="EMBL" id="AB007649">
    <property type="protein sequence ID" value="BAB08804.1"/>
    <property type="molecule type" value="Genomic_DNA"/>
</dbReference>
<dbReference type="EMBL" id="CP002688">
    <property type="protein sequence ID" value="AED97742.1"/>
    <property type="molecule type" value="Genomic_DNA"/>
</dbReference>
<dbReference type="EMBL" id="AY735745">
    <property type="protein sequence ID" value="AAU44615.1"/>
    <property type="molecule type" value="mRNA"/>
</dbReference>
<dbReference type="RefSeq" id="NP_201144.1">
    <property type="nucleotide sequence ID" value="NM_125734.2"/>
</dbReference>
<dbReference type="FunCoup" id="Q9FMW3">
    <property type="interactions" value="39"/>
</dbReference>
<dbReference type="GlyCosmos" id="Q9FMW3">
    <property type="glycosylation" value="5 sites, No reported glycans"/>
</dbReference>
<dbReference type="GlyGen" id="Q9FMW3">
    <property type="glycosylation" value="5 sites"/>
</dbReference>
<dbReference type="PaxDb" id="3702-AT5G63390.1"/>
<dbReference type="EnsemblPlants" id="AT5G63390.1">
    <property type="protein sequence ID" value="AT5G63390.1"/>
    <property type="gene ID" value="AT5G63390"/>
</dbReference>
<dbReference type="GeneID" id="836458"/>
<dbReference type="Gramene" id="AT5G63390.1">
    <property type="protein sequence ID" value="AT5G63390.1"/>
    <property type="gene ID" value="AT5G63390"/>
</dbReference>
<dbReference type="KEGG" id="ath:AT5G63390"/>
<dbReference type="Araport" id="AT5G63390"/>
<dbReference type="TAIR" id="AT5G63390"/>
<dbReference type="eggNOG" id="ENOG502QTFD">
    <property type="taxonomic scope" value="Eukaryota"/>
</dbReference>
<dbReference type="HOGENOM" id="CLU_018420_7_3_1"/>
<dbReference type="InParanoid" id="Q9FMW3"/>
<dbReference type="OMA" id="IARRMWI"/>
<dbReference type="PhylomeDB" id="Q9FMW3"/>
<dbReference type="PRO" id="PR:Q9FMW3"/>
<dbReference type="Proteomes" id="UP000006548">
    <property type="component" value="Chromosome 5"/>
</dbReference>
<dbReference type="ExpressionAtlas" id="Q9FMW3">
    <property type="expression patterns" value="baseline and differential"/>
</dbReference>
<dbReference type="GO" id="GO:0016020">
    <property type="term" value="C:membrane"/>
    <property type="evidence" value="ECO:0007669"/>
    <property type="project" value="UniProtKB-SubCell"/>
</dbReference>
<dbReference type="GO" id="GO:0016757">
    <property type="term" value="F:glycosyltransferase activity"/>
    <property type="evidence" value="ECO:0007669"/>
    <property type="project" value="UniProtKB-KW"/>
</dbReference>
<dbReference type="GO" id="GO:0006004">
    <property type="term" value="P:fucose metabolic process"/>
    <property type="evidence" value="ECO:0007669"/>
    <property type="project" value="UniProtKB-KW"/>
</dbReference>
<dbReference type="CDD" id="cd11299">
    <property type="entry name" value="O-FucT_plant"/>
    <property type="match status" value="1"/>
</dbReference>
<dbReference type="InterPro" id="IPR024709">
    <property type="entry name" value="FucosylTrfase_pln"/>
</dbReference>
<dbReference type="InterPro" id="IPR019378">
    <property type="entry name" value="GDP-Fuc_O-FucTrfase"/>
</dbReference>
<dbReference type="PANTHER" id="PTHR31741:SF63">
    <property type="entry name" value="O-FUCOSYLTRANSFERASE 37"/>
    <property type="match status" value="1"/>
</dbReference>
<dbReference type="PANTHER" id="PTHR31741">
    <property type="entry name" value="OS02G0726500 PROTEIN-RELATED"/>
    <property type="match status" value="1"/>
</dbReference>
<dbReference type="Pfam" id="PF10250">
    <property type="entry name" value="O-FucT"/>
    <property type="match status" value="1"/>
</dbReference>
<dbReference type="PIRSF" id="PIRSF009360">
    <property type="entry name" value="UCP009360"/>
    <property type="match status" value="1"/>
</dbReference>
<name>OFT37_ARATH</name>
<accession>Q9FMW3</accession>
<accession>Q5XUX7</accession>
<comment type="pathway">
    <text evidence="4">Glycan metabolism.</text>
</comment>
<comment type="subcellular location">
    <subcellularLocation>
        <location evidence="2">Membrane</location>
        <topology evidence="4">Single-pass type II membrane protein</topology>
    </subcellularLocation>
</comment>
<comment type="similarity">
    <text evidence="4">Belongs to the glycosyltransferase GT106 family.</text>
</comment>
<reference key="1">
    <citation type="journal article" date="1997" name="DNA Res.">
        <title>Structural analysis of Arabidopsis thaliana chromosome 5. III. Sequence features of the regions of 1,191,918 bp covered by seventeen physically assigned P1 clones.</title>
        <authorList>
            <person name="Nakamura Y."/>
            <person name="Sato S."/>
            <person name="Kaneko T."/>
            <person name="Kotani H."/>
            <person name="Asamizu E."/>
            <person name="Miyajima N."/>
            <person name="Tabata S."/>
        </authorList>
    </citation>
    <scope>NUCLEOTIDE SEQUENCE [LARGE SCALE GENOMIC DNA]</scope>
    <source>
        <strain>cv. Columbia</strain>
    </source>
</reference>
<reference key="2">
    <citation type="journal article" date="2017" name="Plant J.">
        <title>Araport11: a complete reannotation of the Arabidopsis thaliana reference genome.</title>
        <authorList>
            <person name="Cheng C.Y."/>
            <person name="Krishnakumar V."/>
            <person name="Chan A.P."/>
            <person name="Thibaud-Nissen F."/>
            <person name="Schobel S."/>
            <person name="Town C.D."/>
        </authorList>
    </citation>
    <scope>GENOME REANNOTATION</scope>
    <source>
        <strain>cv. Columbia</strain>
    </source>
</reference>
<reference key="3">
    <citation type="submission" date="2004-08" db="EMBL/GenBank/DDBJ databases">
        <title>Reconstruction of cDNA sequences for hypothetical genes in Arabidopsis thaliana from 5' and 3' RACE products.</title>
        <authorList>
            <person name="Xiao Y.-L."/>
            <person name="Underwood B."/>
            <person name="Moskal W."/>
            <person name="Wang W."/>
            <person name="Redman J."/>
            <person name="Wu H.C."/>
            <person name="Utterback T."/>
            <person name="Town C.D."/>
        </authorList>
    </citation>
    <scope>NUCLEOTIDE SEQUENCE [LARGE SCALE MRNA]</scope>
    <source>
        <strain>cv. Columbia</strain>
    </source>
</reference>
<reference key="4">
    <citation type="journal article" date="2012" name="Front. Plant Sci.">
        <title>Plant glycosyltransferases beyond CAZy: a perspective on DUF families.</title>
        <authorList>
            <person name="Hansen S.F."/>
            <person name="Harholt J."/>
            <person name="Oikawa A."/>
            <person name="Scheller H.V."/>
        </authorList>
    </citation>
    <scope>GENE FAMILY</scope>
    <scope>REVIEW</scope>
</reference>
<reference key="5">
    <citation type="journal article" date="2012" name="PLoS ONE">
        <title>The FRIABLE1 gene product affects cell adhesion in Arabidopsis.</title>
        <authorList>
            <person name="Neumetzler L."/>
            <person name="Humphrey T."/>
            <person name="Lumba S."/>
            <person name="Snyder S."/>
            <person name="Yeats T.H."/>
            <person name="Usadel B."/>
            <person name="Vasilevski A."/>
            <person name="Patel J."/>
            <person name="Rose J.K."/>
            <person name="Persson S."/>
            <person name="Bonetta D."/>
        </authorList>
    </citation>
    <scope>GENE FAMILY</scope>
</reference>
<reference key="6">
    <citation type="journal article" date="2012" name="PLoS ONE">
        <title>Identification of putative rhamnogalacturonan-II specific glycosyltransferases in Arabidopsis using a combination of bioinformatics approaches.</title>
        <authorList>
            <person name="Voxeur A."/>
            <person name="Andre A."/>
            <person name="Breton C."/>
            <person name="Lerouge P."/>
        </authorList>
    </citation>
    <scope>GENE FAMILY</scope>
</reference>
<reference key="7">
    <citation type="journal article" date="2013" name="Plant J.">
        <title>Identification of an additional protein involved in mannan biosynthesis.</title>
        <authorList>
            <person name="Wang Y."/>
            <person name="Mortimer J.C."/>
            <person name="Davis J."/>
            <person name="Dupree P."/>
            <person name="Keegstra K."/>
        </authorList>
    </citation>
    <scope>GENE FAMILY</scope>
</reference>
<reference key="8">
    <citation type="journal article" date="2014" name="Plant J.">
        <title>The plant glycosyltransferase clone collection for functional genomics.</title>
        <authorList>
            <person name="Lao J."/>
            <person name="Oikawa A."/>
            <person name="Bromley J.R."/>
            <person name="McInerney P."/>
            <person name="Suttangkakul A."/>
            <person name="Smith-Moritz A.M."/>
            <person name="Plahar H."/>
            <person name="Chiu T.-Y."/>
            <person name="Gonzalez Fernandez-Nino S.M.G."/>
            <person name="Ebert B."/>
            <person name="Yang F."/>
            <person name="Christiansen K.M."/>
            <person name="Hansen S.F."/>
            <person name="Stonebloom S."/>
            <person name="Adams P.D."/>
            <person name="Ronald P.C."/>
            <person name="Hillson N.J."/>
            <person name="Hadi M.Z."/>
            <person name="Vega-Sanchez M.E."/>
            <person name="Loque D."/>
            <person name="Scheller H.V."/>
            <person name="Heazlewood J.L."/>
        </authorList>
    </citation>
    <scope>WEB RESOURCE</scope>
</reference>
<protein>
    <recommendedName>
        <fullName evidence="4">O-fucosyltransferase 37</fullName>
        <shortName evidence="4">O-FucT-37</shortName>
        <ecNumber evidence="4">2.4.1.-</ecNumber>
    </recommendedName>
    <alternativeName>
        <fullName evidence="4">O-fucosyltransferase family protein</fullName>
    </alternativeName>
</protein>
<keyword id="KW-0119">Carbohydrate metabolism</keyword>
<keyword id="KW-0294">Fucose metabolism</keyword>
<keyword id="KW-0325">Glycoprotein</keyword>
<keyword id="KW-0328">Glycosyltransferase</keyword>
<keyword id="KW-0472">Membrane</keyword>
<keyword id="KW-1185">Reference proteome</keyword>
<keyword id="KW-0735">Signal-anchor</keyword>
<keyword id="KW-0808">Transferase</keyword>
<keyword id="KW-0812">Transmembrane</keyword>
<keyword id="KW-1133">Transmembrane helix</keyword>
<gene>
    <name evidence="4" type="primary">OFUT37</name>
    <name evidence="5" type="ordered locus">At5g63390</name>
    <name evidence="6" type="ORF">MLE2.2</name>
</gene>
<feature type="chain" id="PRO_0000442099" description="O-fucosyltransferase 37">
    <location>
        <begin position="1"/>
        <end position="559"/>
    </location>
</feature>
<feature type="transmembrane region" description="Helical; Signal-anchor for type II membrane protein" evidence="4">
    <location>
        <begin position="53"/>
        <end position="73"/>
    </location>
</feature>
<feature type="binding site" evidence="1">
    <location>
        <begin position="331"/>
        <end position="333"/>
    </location>
    <ligand>
        <name>substrate</name>
    </ligand>
</feature>
<feature type="glycosylation site" description="N-linked (GlcNAc...) asparagine" evidence="3">
    <location>
        <position position="126"/>
    </location>
</feature>
<feature type="glycosylation site" description="N-linked (GlcNAc...) asparagine" evidence="3">
    <location>
        <position position="372"/>
    </location>
</feature>
<feature type="glycosylation site" description="N-linked (GlcNAc...) asparagine" evidence="3">
    <location>
        <position position="403"/>
    </location>
</feature>
<feature type="glycosylation site" description="N-linked (GlcNAc...) asparagine" evidence="3">
    <location>
        <position position="447"/>
    </location>
</feature>
<feature type="glycosylation site" description="N-linked (GlcNAc...) asparagine" evidence="3">
    <location>
        <position position="504"/>
    </location>
</feature>
<proteinExistence type="evidence at transcript level"/>
<organism>
    <name type="scientific">Arabidopsis thaliana</name>
    <name type="common">Mouse-ear cress</name>
    <dbReference type="NCBI Taxonomy" id="3702"/>
    <lineage>
        <taxon>Eukaryota</taxon>
        <taxon>Viridiplantae</taxon>
        <taxon>Streptophyta</taxon>
        <taxon>Embryophyta</taxon>
        <taxon>Tracheophyta</taxon>
        <taxon>Spermatophyta</taxon>
        <taxon>Magnoliopsida</taxon>
        <taxon>eudicotyledons</taxon>
        <taxon>Gunneridae</taxon>
        <taxon>Pentapetalae</taxon>
        <taxon>rosids</taxon>
        <taxon>malvids</taxon>
        <taxon>Brassicales</taxon>
        <taxon>Brassicaceae</taxon>
        <taxon>Camelineae</taxon>
        <taxon>Arabidopsis</taxon>
    </lineage>
</organism>
<evidence type="ECO:0000250" key="1">
    <source>
        <dbReference type="UniProtKB" id="Q9H488"/>
    </source>
</evidence>
<evidence type="ECO:0000255" key="2"/>
<evidence type="ECO:0000255" key="3">
    <source>
        <dbReference type="PROSITE-ProRule" id="PRU00498"/>
    </source>
</evidence>
<evidence type="ECO:0000305" key="4"/>
<evidence type="ECO:0000312" key="5">
    <source>
        <dbReference type="Araport" id="AT5G63390"/>
    </source>
</evidence>
<evidence type="ECO:0000312" key="6">
    <source>
        <dbReference type="EMBL" id="BAB08804.1"/>
    </source>
</evidence>
<sequence>MAKSMRTIKNPFFTSHPPSPFFHLSLLFFTPLKKSSPRYLNHHHQTRCPPPQFFLLLISLSLVFSGISFLTFSLDTGSSTCVSTSSASSLKFFISDVDHRQILTSLAVSGASTLFPLPARGGHSGNMTEEEKEFWKQPNGEGYKPCLDFSLEYKKKSASVSKEKKRFLVVVVSGGLNQQRNQIVDAVVIAMILEAALVVPVLQVNRVWGDESEFSDLFDVEHFKKTLRSDVRIVSSLPSTHLMSRQTIENQIPWDVSPVWIRAKYFKQLNEEGLLVLKGLDSKLAKNLPPDLQKLRCKVAFHALRFAAPIENLGNKLTRRMWIEGPYIALHLRLEKDVWVRTGCLTGLGSEFDRIIAETRTSQPRYLTGRLNLTYTERRLAGFCPLNVYEIARLLKALGAPSNASIYIAGGEPFGGSRALEPLAKEFSNLVTKETLAHKGELLPYTNRSSALAAIDYIVSLSSDVFIPSHGGNMAKAMQGNRAYVGHRKFIMPNKRAMLPLMENSSVSDAELSFLTRKLHRKSQGYPESRRGRRDRDVIAYPVPECMCRHRKHRSVGFF</sequence>